<keyword id="KW-1003">Cell membrane</keyword>
<keyword id="KW-0407">Ion channel</keyword>
<keyword id="KW-0406">Ion transport</keyword>
<keyword id="KW-0472">Membrane</keyword>
<keyword id="KW-0479">Metal-binding</keyword>
<keyword id="KW-1185">Reference proteome</keyword>
<keyword id="KW-0915">Sodium</keyword>
<keyword id="KW-0812">Transmembrane</keyword>
<keyword id="KW-1133">Transmembrane helix</keyword>
<keyword id="KW-0813">Transport</keyword>
<protein>
    <recommendedName>
        <fullName evidence="1">Fluoride-specific ion channel FluC 1</fullName>
    </recommendedName>
</protein>
<evidence type="ECO:0000255" key="1">
    <source>
        <dbReference type="HAMAP-Rule" id="MF_00454"/>
    </source>
</evidence>
<proteinExistence type="inferred from homology"/>
<sequence length="123" mass="13691">MVDLLLIGLGGSIGAILRYTLTKKIGERYQGDWPLATFLINIIGSFGLGLLYGFKLNQVIWLLLGTGFFGGFTTFSTYIYEAIFLMEEGLFWKNVNYLLTSIFTGVVFFAAGMWLANFFKGGV</sequence>
<name>FLUC1_CARHZ</name>
<gene>
    <name evidence="1" type="primary">fluC1</name>
    <name evidence="1" type="synonym">crcB1</name>
    <name type="ordered locus">CHY_2103</name>
</gene>
<comment type="function">
    <text evidence="1">Fluoride-specific ion channel. Important for reducing fluoride concentration in the cell, thus reducing its toxicity.</text>
</comment>
<comment type="catalytic activity">
    <reaction evidence="1">
        <text>fluoride(in) = fluoride(out)</text>
        <dbReference type="Rhea" id="RHEA:76159"/>
        <dbReference type="ChEBI" id="CHEBI:17051"/>
    </reaction>
    <physiologicalReaction direction="left-to-right" evidence="1">
        <dbReference type="Rhea" id="RHEA:76160"/>
    </physiologicalReaction>
</comment>
<comment type="activity regulation">
    <text evidence="1">Na(+) is not transported, but it plays an essential structural role and its presence is essential for fluoride channel function.</text>
</comment>
<comment type="subcellular location">
    <subcellularLocation>
        <location evidence="1">Cell membrane</location>
        <topology evidence="1">Multi-pass membrane protein</topology>
    </subcellularLocation>
</comment>
<comment type="similarity">
    <text evidence="1">Belongs to the fluoride channel Fluc/FEX (TC 1.A.43) family.</text>
</comment>
<feature type="chain" id="PRO_0000252865" description="Fluoride-specific ion channel FluC 1">
    <location>
        <begin position="1"/>
        <end position="123"/>
    </location>
</feature>
<feature type="transmembrane region" description="Helical" evidence="1">
    <location>
        <begin position="1"/>
        <end position="21"/>
    </location>
</feature>
<feature type="transmembrane region" description="Helical" evidence="1">
    <location>
        <begin position="34"/>
        <end position="54"/>
    </location>
</feature>
<feature type="transmembrane region" description="Helical" evidence="1">
    <location>
        <begin position="59"/>
        <end position="79"/>
    </location>
</feature>
<feature type="transmembrane region" description="Helical" evidence="1">
    <location>
        <begin position="99"/>
        <end position="119"/>
    </location>
</feature>
<feature type="binding site" evidence="1">
    <location>
        <position position="70"/>
    </location>
    <ligand>
        <name>Na(+)</name>
        <dbReference type="ChEBI" id="CHEBI:29101"/>
        <note>structural</note>
    </ligand>
</feature>
<feature type="binding site" evidence="1">
    <location>
        <position position="73"/>
    </location>
    <ligand>
        <name>Na(+)</name>
        <dbReference type="ChEBI" id="CHEBI:29101"/>
        <note>structural</note>
    </ligand>
</feature>
<accession>Q3AAB2</accession>
<organism>
    <name type="scientific">Carboxydothermus hydrogenoformans (strain ATCC BAA-161 / DSM 6008 / Z-2901)</name>
    <dbReference type="NCBI Taxonomy" id="246194"/>
    <lineage>
        <taxon>Bacteria</taxon>
        <taxon>Bacillati</taxon>
        <taxon>Bacillota</taxon>
        <taxon>Clostridia</taxon>
        <taxon>Thermoanaerobacterales</taxon>
        <taxon>Thermoanaerobacteraceae</taxon>
        <taxon>Carboxydothermus</taxon>
    </lineage>
</organism>
<dbReference type="EMBL" id="CP000141">
    <property type="protein sequence ID" value="ABB14323.1"/>
    <property type="molecule type" value="Genomic_DNA"/>
</dbReference>
<dbReference type="RefSeq" id="WP_011344995.1">
    <property type="nucleotide sequence ID" value="NC_007503.1"/>
</dbReference>
<dbReference type="SMR" id="Q3AAB2"/>
<dbReference type="FunCoup" id="Q3AAB2">
    <property type="interactions" value="211"/>
</dbReference>
<dbReference type="STRING" id="246194.CHY_2103"/>
<dbReference type="KEGG" id="chy:CHY_2103"/>
<dbReference type="eggNOG" id="COG0239">
    <property type="taxonomic scope" value="Bacteria"/>
</dbReference>
<dbReference type="HOGENOM" id="CLU_114342_2_3_9"/>
<dbReference type="InParanoid" id="Q3AAB2"/>
<dbReference type="OrthoDB" id="9815830at2"/>
<dbReference type="Proteomes" id="UP000002706">
    <property type="component" value="Chromosome"/>
</dbReference>
<dbReference type="GO" id="GO:0005886">
    <property type="term" value="C:plasma membrane"/>
    <property type="evidence" value="ECO:0007669"/>
    <property type="project" value="UniProtKB-SubCell"/>
</dbReference>
<dbReference type="GO" id="GO:0062054">
    <property type="term" value="F:fluoride channel activity"/>
    <property type="evidence" value="ECO:0007669"/>
    <property type="project" value="UniProtKB-UniRule"/>
</dbReference>
<dbReference type="GO" id="GO:0046872">
    <property type="term" value="F:metal ion binding"/>
    <property type="evidence" value="ECO:0007669"/>
    <property type="project" value="UniProtKB-KW"/>
</dbReference>
<dbReference type="GO" id="GO:0140114">
    <property type="term" value="P:cellular detoxification of fluoride"/>
    <property type="evidence" value="ECO:0007669"/>
    <property type="project" value="UniProtKB-UniRule"/>
</dbReference>
<dbReference type="HAMAP" id="MF_00454">
    <property type="entry name" value="FluC"/>
    <property type="match status" value="1"/>
</dbReference>
<dbReference type="InterPro" id="IPR003691">
    <property type="entry name" value="FluC"/>
</dbReference>
<dbReference type="NCBIfam" id="TIGR00494">
    <property type="entry name" value="crcB"/>
    <property type="match status" value="1"/>
</dbReference>
<dbReference type="PANTHER" id="PTHR28259">
    <property type="entry name" value="FLUORIDE EXPORT PROTEIN 1-RELATED"/>
    <property type="match status" value="1"/>
</dbReference>
<dbReference type="PANTHER" id="PTHR28259:SF1">
    <property type="entry name" value="FLUORIDE EXPORT PROTEIN 1-RELATED"/>
    <property type="match status" value="1"/>
</dbReference>
<dbReference type="Pfam" id="PF02537">
    <property type="entry name" value="CRCB"/>
    <property type="match status" value="1"/>
</dbReference>
<reference key="1">
    <citation type="journal article" date="2005" name="PLoS Genet.">
        <title>Life in hot carbon monoxide: the complete genome sequence of Carboxydothermus hydrogenoformans Z-2901.</title>
        <authorList>
            <person name="Wu M."/>
            <person name="Ren Q."/>
            <person name="Durkin A.S."/>
            <person name="Daugherty S.C."/>
            <person name="Brinkac L.M."/>
            <person name="Dodson R.J."/>
            <person name="Madupu R."/>
            <person name="Sullivan S.A."/>
            <person name="Kolonay J.F."/>
            <person name="Nelson W.C."/>
            <person name="Tallon L.J."/>
            <person name="Jones K.M."/>
            <person name="Ulrich L.E."/>
            <person name="Gonzalez J.M."/>
            <person name="Zhulin I.B."/>
            <person name="Robb F.T."/>
            <person name="Eisen J.A."/>
        </authorList>
    </citation>
    <scope>NUCLEOTIDE SEQUENCE [LARGE SCALE GENOMIC DNA]</scope>
    <source>
        <strain>ATCC BAA-161 / DSM 6008 / Z-2901</strain>
    </source>
</reference>